<comment type="function">
    <text evidence="1">Required for rescue of stalled ribosomes mediated by trans-translation. Binds to transfer-messenger RNA (tmRNA), required for stable association of tmRNA with ribosomes. tmRNA and SmpB together mimic tRNA shape, replacing the anticodon stem-loop with SmpB. tmRNA is encoded by the ssrA gene; the 2 termini fold to resemble tRNA(Ala) and it encodes a 'tag peptide', a short internal open reading frame. During trans-translation Ala-aminoacylated tmRNA acts like a tRNA, entering the A-site of stalled ribosomes, displacing the stalled mRNA. The ribosome then switches to translate the ORF on the tmRNA; the nascent peptide is terminated with the 'tag peptide' encoded by the tmRNA and targeted for degradation. The ribosome is freed to recommence translation, which seems to be the essential function of trans-translation.</text>
</comment>
<comment type="subcellular location">
    <subcellularLocation>
        <location evidence="1">Cytoplasm</location>
    </subcellularLocation>
    <text evidence="1">The tmRNA-SmpB complex associates with stalled 70S ribosomes.</text>
</comment>
<comment type="similarity">
    <text evidence="1">Belongs to the SmpB family.</text>
</comment>
<gene>
    <name evidence="1" type="primary">smpB</name>
    <name type="ordered locus">CCA_00446</name>
</gene>
<organism>
    <name type="scientific">Chlamydia caviae (strain ATCC VR-813 / DSM 19441 / 03DC25 / GPIC)</name>
    <name type="common">Chlamydophila caviae</name>
    <dbReference type="NCBI Taxonomy" id="227941"/>
    <lineage>
        <taxon>Bacteria</taxon>
        <taxon>Pseudomonadati</taxon>
        <taxon>Chlamydiota</taxon>
        <taxon>Chlamydiia</taxon>
        <taxon>Chlamydiales</taxon>
        <taxon>Chlamydiaceae</taxon>
        <taxon>Chlamydia/Chlamydophila group</taxon>
        <taxon>Chlamydia</taxon>
    </lineage>
</organism>
<protein>
    <recommendedName>
        <fullName evidence="1">SsrA-binding protein</fullName>
    </recommendedName>
    <alternativeName>
        <fullName evidence="1">Small protein B</fullName>
    </alternativeName>
</protein>
<evidence type="ECO:0000255" key="1">
    <source>
        <dbReference type="HAMAP-Rule" id="MF_00023"/>
    </source>
</evidence>
<feature type="chain" id="PRO_0000102928" description="SsrA-binding protein">
    <location>
        <begin position="1"/>
        <end position="150"/>
    </location>
</feature>
<dbReference type="EMBL" id="AE015925">
    <property type="protein sequence ID" value="AAP05192.1"/>
    <property type="molecule type" value="Genomic_DNA"/>
</dbReference>
<dbReference type="RefSeq" id="WP_011006408.1">
    <property type="nucleotide sequence ID" value="NC_003361.3"/>
</dbReference>
<dbReference type="SMR" id="Q823G4"/>
<dbReference type="STRING" id="227941.CCA_00446"/>
<dbReference type="KEGG" id="cca:CCA_00446"/>
<dbReference type="eggNOG" id="COG0691">
    <property type="taxonomic scope" value="Bacteria"/>
</dbReference>
<dbReference type="HOGENOM" id="CLU_108953_0_1_0"/>
<dbReference type="OrthoDB" id="9805462at2"/>
<dbReference type="Proteomes" id="UP000002193">
    <property type="component" value="Chromosome"/>
</dbReference>
<dbReference type="GO" id="GO:0005829">
    <property type="term" value="C:cytosol"/>
    <property type="evidence" value="ECO:0007669"/>
    <property type="project" value="TreeGrafter"/>
</dbReference>
<dbReference type="GO" id="GO:0003723">
    <property type="term" value="F:RNA binding"/>
    <property type="evidence" value="ECO:0007669"/>
    <property type="project" value="UniProtKB-UniRule"/>
</dbReference>
<dbReference type="GO" id="GO:0070929">
    <property type="term" value="P:trans-translation"/>
    <property type="evidence" value="ECO:0007669"/>
    <property type="project" value="UniProtKB-UniRule"/>
</dbReference>
<dbReference type="CDD" id="cd09294">
    <property type="entry name" value="SmpB"/>
    <property type="match status" value="1"/>
</dbReference>
<dbReference type="Gene3D" id="2.40.280.10">
    <property type="match status" value="1"/>
</dbReference>
<dbReference type="HAMAP" id="MF_00023">
    <property type="entry name" value="SmpB"/>
    <property type="match status" value="1"/>
</dbReference>
<dbReference type="InterPro" id="IPR023620">
    <property type="entry name" value="SmpB"/>
</dbReference>
<dbReference type="InterPro" id="IPR000037">
    <property type="entry name" value="SsrA-bd_prot"/>
</dbReference>
<dbReference type="InterPro" id="IPR020081">
    <property type="entry name" value="SsrA-bd_prot_CS"/>
</dbReference>
<dbReference type="NCBIfam" id="NF003843">
    <property type="entry name" value="PRK05422.1"/>
    <property type="match status" value="1"/>
</dbReference>
<dbReference type="NCBIfam" id="TIGR00086">
    <property type="entry name" value="smpB"/>
    <property type="match status" value="1"/>
</dbReference>
<dbReference type="PANTHER" id="PTHR30308:SF2">
    <property type="entry name" value="SSRA-BINDING PROTEIN"/>
    <property type="match status" value="1"/>
</dbReference>
<dbReference type="PANTHER" id="PTHR30308">
    <property type="entry name" value="TMRNA-BINDING COMPONENT OF TRANS-TRANSLATION TAGGING COMPLEX"/>
    <property type="match status" value="1"/>
</dbReference>
<dbReference type="Pfam" id="PF01668">
    <property type="entry name" value="SmpB"/>
    <property type="match status" value="1"/>
</dbReference>
<dbReference type="SUPFAM" id="SSF74982">
    <property type="entry name" value="Small protein B (SmpB)"/>
    <property type="match status" value="1"/>
</dbReference>
<dbReference type="PROSITE" id="PS01317">
    <property type="entry name" value="SSRP"/>
    <property type="match status" value="1"/>
</dbReference>
<name>SSRP_CHLCV</name>
<keyword id="KW-0963">Cytoplasm</keyword>
<keyword id="KW-0694">RNA-binding</keyword>
<accession>Q823G4</accession>
<reference key="1">
    <citation type="journal article" date="2003" name="Nucleic Acids Res.">
        <title>Genome sequence of Chlamydophila caviae (Chlamydia psittaci GPIC): examining the role of niche-specific genes in the evolution of the Chlamydiaceae.</title>
        <authorList>
            <person name="Read T.D."/>
            <person name="Myers G.S.A."/>
            <person name="Brunham R.C."/>
            <person name="Nelson W.C."/>
            <person name="Paulsen I.T."/>
            <person name="Heidelberg J.F."/>
            <person name="Holtzapple E.K."/>
            <person name="Khouri H.M."/>
            <person name="Federova N.B."/>
            <person name="Carty H.A."/>
            <person name="Umayam L.A."/>
            <person name="Haft D.H."/>
            <person name="Peterson J.D."/>
            <person name="Beanan M.J."/>
            <person name="White O."/>
            <person name="Salzberg S.L."/>
            <person name="Hsia R.-C."/>
            <person name="McClarty G."/>
            <person name="Rank R.G."/>
            <person name="Bavoil P.M."/>
            <person name="Fraser C.M."/>
        </authorList>
    </citation>
    <scope>NUCLEOTIDE SEQUENCE [LARGE SCALE GENOMIC DNA]</scope>
    <source>
        <strain>ATCC VR-813 / DSM 19441 / 03DC25 / GPIC</strain>
    </source>
</reference>
<sequence>MSSKEIVSNRKALRNYEVLDTLEAGVVLTGTEIKSLRDHGGNLGDAYVAISKGEAWLLNASIAPYRFGNIYNHEERRKRKLLLHRYEIRKLEGRVAQKGITIIPLGMFLSRGYVKIRLGCCRGKKAHDKRQTIIAREKQREVESAMKRYR</sequence>
<proteinExistence type="inferred from homology"/>